<gene>
    <name type="primary">PHO1-H9</name>
    <name type="ordered locus">At3g29060</name>
    <name type="ORF">MRI12.4</name>
</gene>
<comment type="function">
    <text evidence="1">May transport inorganic phosphate (Pi).</text>
</comment>
<comment type="subcellular location">
    <subcellularLocation>
        <location evidence="7">Cell membrane</location>
        <topology evidence="7">Multi-pass membrane protein</topology>
    </subcellularLocation>
</comment>
<comment type="tissue specificity">
    <text evidence="6">Specifically expressed in pollen grains.</text>
</comment>
<comment type="induction">
    <text evidence="6">Not induced by Pi deficiency.</text>
</comment>
<comment type="similarity">
    <text evidence="7">Belongs to the SYG1 (TC 2.A.94) family.</text>
</comment>
<sequence length="800" mass="92441">MKFGREFETQMIQEWKEAYMDYRSLKSIVKQILRYRLQKQQRPPPPPPPPSTGDTVPLKTDGGEGGGGGGGGGPGLSRRISLYRAFSGLTNRASRSPKKSHKHHNPLSSKRHHHHHNHHHYHLFDDDEEQIILINEDETASYTTTFLNSAEEGGEMEVQFFRRLDGEFNKVLRFYKQKVENVMEEADELSRQLNVLIALRVKVENPHVHLPPDLNSVASAPSSPHSTMRTPAPSPMDVIREMEKTEDKKVFKPAPVEMLDHVKLKIDPETPLLTLKMMILGLPSEQTFSKPELRRAEELMNRAFVEFYQKLRFLKSYCFLNQLAFAKILKKYDKTTSRNASKPYLNTVDHSYLGSCDEVSRLMSRVEATFIKHFANGNHREGMKCLRPKTKREKHRITYFLGFFSGCAVALAIAITVLVHIRGLTKSEGRHQYMENIFPLYSLFGFVAVHLFMYAADIYFWSRYRVNYPFIFGFEQGNDLGYREVLLVGSGLAVLTFGGVISNLDMEMDPRTKSFSVITELVPLALLVCLMMVLFCPFNIIYRSSRYFFVGSVFRCLLSPLYKVILPDFFLADQLTSQVQTFRSLLFYVCYYGWGGDFKRRTHTCYDSEIYKELYLVVAIIPYWFRFAQSIRRLVEEKDKMHGLNALKYLSTILAVAARTIFEMKRGTYWLTVAVTTSSIATLFNTYWDIFRDWGLMNRNSKNPWLRDKLLVPYKSIYFIVMVANVVLRLAWMQTVLGIKEAPFLHKRALVAVVASLEIVRRGIWNFFRLENEHLNNVGKYRAFKSVPLPFQELGGSKSV</sequence>
<dbReference type="EMBL" id="AY507961">
    <property type="protein sequence ID" value="AAR99491.1"/>
    <property type="molecule type" value="mRNA"/>
</dbReference>
<dbReference type="EMBL" id="AP000388">
    <property type="protein sequence ID" value="BAB02948.1"/>
    <property type="molecule type" value="Genomic_DNA"/>
</dbReference>
<dbReference type="EMBL" id="CP002686">
    <property type="protein sequence ID" value="AEE77530.1"/>
    <property type="molecule type" value="Genomic_DNA"/>
</dbReference>
<dbReference type="RefSeq" id="NP_189549.2">
    <property type="nucleotide sequence ID" value="NM_113828.3"/>
</dbReference>
<dbReference type="SMR" id="Q9LJW0"/>
<dbReference type="FunCoup" id="Q9LJW0">
    <property type="interactions" value="2656"/>
</dbReference>
<dbReference type="STRING" id="3702.Q9LJW0"/>
<dbReference type="iPTMnet" id="Q9LJW0"/>
<dbReference type="PaxDb" id="3702-AT3G29060.1"/>
<dbReference type="ProteomicsDB" id="235059"/>
<dbReference type="EnsemblPlants" id="AT3G29060.1">
    <property type="protein sequence ID" value="AT3G29060.1"/>
    <property type="gene ID" value="AT3G29060"/>
</dbReference>
<dbReference type="GeneID" id="822550"/>
<dbReference type="Gramene" id="AT3G29060.1">
    <property type="protein sequence ID" value="AT3G29060.1"/>
    <property type="gene ID" value="AT3G29060"/>
</dbReference>
<dbReference type="KEGG" id="ath:AT3G29060"/>
<dbReference type="Araport" id="AT3G29060"/>
<dbReference type="TAIR" id="AT3G29060"/>
<dbReference type="eggNOG" id="KOG1162">
    <property type="taxonomic scope" value="Eukaryota"/>
</dbReference>
<dbReference type="HOGENOM" id="CLU_006116_2_0_1"/>
<dbReference type="InParanoid" id="Q9LJW0"/>
<dbReference type="OMA" id="TRDINLW"/>
<dbReference type="PhylomeDB" id="Q9LJW0"/>
<dbReference type="PRO" id="PR:Q9LJW0"/>
<dbReference type="Proteomes" id="UP000006548">
    <property type="component" value="Chromosome 3"/>
</dbReference>
<dbReference type="ExpressionAtlas" id="Q9LJW0">
    <property type="expression patterns" value="baseline and differential"/>
</dbReference>
<dbReference type="GO" id="GO:0005886">
    <property type="term" value="C:plasma membrane"/>
    <property type="evidence" value="ECO:0007669"/>
    <property type="project" value="UniProtKB-SubCell"/>
</dbReference>
<dbReference type="GO" id="GO:0006817">
    <property type="term" value="P:phosphate ion transport"/>
    <property type="evidence" value="ECO:0007669"/>
    <property type="project" value="UniProtKB-KW"/>
</dbReference>
<dbReference type="CDD" id="cd14476">
    <property type="entry name" value="SPX_PHO1_like"/>
    <property type="match status" value="1"/>
</dbReference>
<dbReference type="InterPro" id="IPR004342">
    <property type="entry name" value="EXS_C"/>
</dbReference>
<dbReference type="InterPro" id="IPR034092">
    <property type="entry name" value="PHO1_SPX"/>
</dbReference>
<dbReference type="InterPro" id="IPR004331">
    <property type="entry name" value="SPX_dom"/>
</dbReference>
<dbReference type="PANTHER" id="PTHR10783:SF124">
    <property type="entry name" value="PHOSPHATE TRANSPORTER PHO1 HOMOLOG 9"/>
    <property type="match status" value="1"/>
</dbReference>
<dbReference type="PANTHER" id="PTHR10783">
    <property type="entry name" value="XENOTROPIC AND POLYTROPIC RETROVIRUS RECEPTOR 1-RELATED"/>
    <property type="match status" value="1"/>
</dbReference>
<dbReference type="Pfam" id="PF03124">
    <property type="entry name" value="EXS"/>
    <property type="match status" value="1"/>
</dbReference>
<dbReference type="Pfam" id="PF03105">
    <property type="entry name" value="SPX"/>
    <property type="match status" value="1"/>
</dbReference>
<dbReference type="PROSITE" id="PS51380">
    <property type="entry name" value="EXS"/>
    <property type="match status" value="1"/>
</dbReference>
<dbReference type="PROSITE" id="PS51382">
    <property type="entry name" value="SPX"/>
    <property type="match status" value="1"/>
</dbReference>
<feature type="chain" id="PRO_0000398163" description="Phosphate transporter PHO1 homolog 9">
    <location>
        <begin position="1"/>
        <end position="800"/>
    </location>
</feature>
<feature type="topological domain" description="Cytoplasmic" evidence="2">
    <location>
        <begin position="1"/>
        <end position="398"/>
    </location>
</feature>
<feature type="transmembrane region" description="Helical" evidence="2">
    <location>
        <begin position="399"/>
        <end position="419"/>
    </location>
</feature>
<feature type="topological domain" description="Extracellular" evidence="2">
    <location>
        <begin position="420"/>
        <end position="439"/>
    </location>
</feature>
<feature type="transmembrane region" description="Helical" evidence="2">
    <location>
        <begin position="440"/>
        <end position="460"/>
    </location>
</feature>
<feature type="topological domain" description="Cytoplasmic" evidence="2">
    <location>
        <begin position="461"/>
        <end position="483"/>
    </location>
</feature>
<feature type="transmembrane region" description="Helical" evidence="2">
    <location>
        <begin position="484"/>
        <end position="504"/>
    </location>
</feature>
<feature type="topological domain" description="Extracellular" evidence="2">
    <location>
        <begin position="505"/>
        <end position="520"/>
    </location>
</feature>
<feature type="transmembrane region" description="Helical" evidence="2">
    <location>
        <begin position="521"/>
        <end position="541"/>
    </location>
</feature>
<feature type="topological domain" description="Cytoplasmic" evidence="2">
    <location>
        <begin position="542"/>
        <end position="670"/>
    </location>
</feature>
<feature type="transmembrane region" description="Helical" evidence="2">
    <location>
        <begin position="671"/>
        <end position="691"/>
    </location>
</feature>
<feature type="topological domain" description="Extracellular" evidence="2">
    <location>
        <begin position="692"/>
        <end position="718"/>
    </location>
</feature>
<feature type="transmembrane region" description="Helical" evidence="2">
    <location>
        <begin position="719"/>
        <end position="739"/>
    </location>
</feature>
<feature type="topological domain" description="Cytoplasmic" evidence="2">
    <location>
        <begin position="740"/>
        <end position="800"/>
    </location>
</feature>
<feature type="domain" description="SPX" evidence="4">
    <location>
        <begin position="1"/>
        <end position="346"/>
    </location>
</feature>
<feature type="domain" description="EXS" evidence="3">
    <location>
        <begin position="606"/>
        <end position="800"/>
    </location>
</feature>
<feature type="region of interest" description="Disordered" evidence="5">
    <location>
        <begin position="38"/>
        <end position="77"/>
    </location>
</feature>
<feature type="region of interest" description="Disordered" evidence="5">
    <location>
        <begin position="91"/>
        <end position="119"/>
    </location>
</feature>
<feature type="region of interest" description="Disordered" evidence="5">
    <location>
        <begin position="212"/>
        <end position="234"/>
    </location>
</feature>
<feature type="compositionally biased region" description="Pro residues" evidence="5">
    <location>
        <begin position="42"/>
        <end position="51"/>
    </location>
</feature>
<feature type="compositionally biased region" description="Gly residues" evidence="5">
    <location>
        <begin position="63"/>
        <end position="75"/>
    </location>
</feature>
<feature type="compositionally biased region" description="Basic residues" evidence="5">
    <location>
        <begin position="95"/>
        <end position="119"/>
    </location>
</feature>
<feature type="compositionally biased region" description="Polar residues" evidence="5">
    <location>
        <begin position="216"/>
        <end position="229"/>
    </location>
</feature>
<feature type="sequence conflict" description="In Ref. 1; AAR99491." evidence="7" ref="1">
    <original>R</original>
    <variation>K</variation>
    <location>
        <position position="200"/>
    </location>
</feature>
<feature type="sequence conflict" description="In Ref. 1; AAR99491." evidence="7" ref="1">
    <original>S</original>
    <variation>P</variation>
    <location>
        <position position="490"/>
    </location>
</feature>
<accession>Q9LJW0</accession>
<accession>Q6R8G1</accession>
<evidence type="ECO:0000250" key="1"/>
<evidence type="ECO:0000255" key="2"/>
<evidence type="ECO:0000255" key="3">
    <source>
        <dbReference type="PROSITE-ProRule" id="PRU00712"/>
    </source>
</evidence>
<evidence type="ECO:0000255" key="4">
    <source>
        <dbReference type="PROSITE-ProRule" id="PRU00714"/>
    </source>
</evidence>
<evidence type="ECO:0000256" key="5">
    <source>
        <dbReference type="SAM" id="MobiDB-lite"/>
    </source>
</evidence>
<evidence type="ECO:0000269" key="6">
    <source>
    </source>
</evidence>
<evidence type="ECO:0000305" key="7"/>
<keyword id="KW-1003">Cell membrane</keyword>
<keyword id="KW-0472">Membrane</keyword>
<keyword id="KW-0592">Phosphate transport</keyword>
<keyword id="KW-1185">Reference proteome</keyword>
<keyword id="KW-0812">Transmembrane</keyword>
<keyword id="KW-1133">Transmembrane helix</keyword>
<keyword id="KW-0813">Transport</keyword>
<reference key="1">
    <citation type="journal article" date="2004" name="Plant Physiol.">
        <title>Structure and expression profile of the Arabidopsis PHO1 gene family indicates a broad role in inorganic phosphate homeostasis.</title>
        <authorList>
            <person name="Wang Y."/>
            <person name="Ribot C."/>
            <person name="Rezzonico E."/>
            <person name="Poirier Y."/>
        </authorList>
    </citation>
    <scope>NUCLEOTIDE SEQUENCE [MRNA]</scope>
    <scope>TISSUE SPECIFICITY</scope>
    <scope>INDUCTION</scope>
    <scope>GENE FAMILY</scope>
    <scope>NOMENCLATURE</scope>
</reference>
<reference key="2">
    <citation type="journal article" date="2000" name="DNA Res.">
        <title>Structural analysis of Arabidopsis thaliana chromosome 3. II. Sequence features of the 4,251,695 bp regions covered by 90 P1, TAC and BAC clones.</title>
        <authorList>
            <person name="Kaneko T."/>
            <person name="Katoh T."/>
            <person name="Sato S."/>
            <person name="Nakamura Y."/>
            <person name="Asamizu E."/>
            <person name="Tabata S."/>
        </authorList>
    </citation>
    <scope>NUCLEOTIDE SEQUENCE [LARGE SCALE GENOMIC DNA]</scope>
    <source>
        <strain>cv. Columbia</strain>
    </source>
</reference>
<reference key="3">
    <citation type="journal article" date="2017" name="Plant J.">
        <title>Araport11: a complete reannotation of the Arabidopsis thaliana reference genome.</title>
        <authorList>
            <person name="Cheng C.Y."/>
            <person name="Krishnakumar V."/>
            <person name="Chan A.P."/>
            <person name="Thibaud-Nissen F."/>
            <person name="Schobel S."/>
            <person name="Town C.D."/>
        </authorList>
    </citation>
    <scope>GENOME REANNOTATION</scope>
    <source>
        <strain>cv. Columbia</strain>
    </source>
</reference>
<name>PHO19_ARATH</name>
<organism>
    <name type="scientific">Arabidopsis thaliana</name>
    <name type="common">Mouse-ear cress</name>
    <dbReference type="NCBI Taxonomy" id="3702"/>
    <lineage>
        <taxon>Eukaryota</taxon>
        <taxon>Viridiplantae</taxon>
        <taxon>Streptophyta</taxon>
        <taxon>Embryophyta</taxon>
        <taxon>Tracheophyta</taxon>
        <taxon>Spermatophyta</taxon>
        <taxon>Magnoliopsida</taxon>
        <taxon>eudicotyledons</taxon>
        <taxon>Gunneridae</taxon>
        <taxon>Pentapetalae</taxon>
        <taxon>rosids</taxon>
        <taxon>malvids</taxon>
        <taxon>Brassicales</taxon>
        <taxon>Brassicaceae</taxon>
        <taxon>Camelineae</taxon>
        <taxon>Arabidopsis</taxon>
    </lineage>
</organism>
<proteinExistence type="evidence at transcript level"/>
<protein>
    <recommendedName>
        <fullName>Phosphate transporter PHO1 homolog 9</fullName>
    </recommendedName>
    <alternativeName>
        <fullName>Protein PHO1 homolog 9</fullName>
        <shortName>AtPHO1;H9</shortName>
    </alternativeName>
</protein>